<organism>
    <name type="scientific">Staphylococcus aureus (strain Newman)</name>
    <dbReference type="NCBI Taxonomy" id="426430"/>
    <lineage>
        <taxon>Bacteria</taxon>
        <taxon>Bacillati</taxon>
        <taxon>Bacillota</taxon>
        <taxon>Bacilli</taxon>
        <taxon>Bacillales</taxon>
        <taxon>Staphylococcaceae</taxon>
        <taxon>Staphylococcus</taxon>
    </lineage>
</organism>
<keyword id="KW-0119">Carbohydrate metabolism</keyword>
<keyword id="KW-0963">Cytoplasm</keyword>
<keyword id="KW-0456">Lyase</keyword>
<keyword id="KW-0704">Schiff base</keyword>
<protein>
    <recommendedName>
        <fullName evidence="1">N-acetylneuraminate lyase</fullName>
        <shortName evidence="1">NAL</shortName>
        <shortName evidence="1">Neu5Ac lyase</shortName>
        <ecNumber evidence="1">4.1.3.3</ecNumber>
    </recommendedName>
    <alternativeName>
        <fullName evidence="1">N-acetylneuraminate pyruvate-lyase</fullName>
    </alternativeName>
    <alternativeName>
        <fullName evidence="1">N-acetylneuraminic acid aldolase</fullName>
    </alternativeName>
    <alternativeName>
        <fullName evidence="1">Sialate lyase</fullName>
    </alternativeName>
    <alternativeName>
        <fullName evidence="1">Sialic acid aldolase</fullName>
    </alternativeName>
    <alternativeName>
        <fullName evidence="1">Sialic acid lyase</fullName>
    </alternativeName>
</protein>
<name>NANA_STAAE</name>
<comment type="function">
    <text evidence="1">Catalyzes the reversible aldol cleavage of N-acetylneuraminic acid (sialic acid; Neu5Ac) to form pyruvate and N-acetylmannosamine (ManNAc) via a Schiff base intermediate.</text>
</comment>
<comment type="catalytic activity">
    <reaction evidence="1">
        <text>aceneuramate = aldehydo-N-acetyl-D-mannosamine + pyruvate</text>
        <dbReference type="Rhea" id="RHEA:23296"/>
        <dbReference type="ChEBI" id="CHEBI:15361"/>
        <dbReference type="ChEBI" id="CHEBI:17122"/>
        <dbReference type="ChEBI" id="CHEBI:173083"/>
        <dbReference type="EC" id="4.1.3.3"/>
    </reaction>
</comment>
<comment type="pathway">
    <text evidence="1">Amino-sugar metabolism; N-acetylneuraminate degradation; D-fructose 6-phosphate from N-acetylneuraminate: step 1/5.</text>
</comment>
<comment type="subunit">
    <text evidence="1">Homotetramer.</text>
</comment>
<comment type="subcellular location">
    <subcellularLocation>
        <location evidence="1">Cytoplasm</location>
    </subcellularLocation>
</comment>
<comment type="similarity">
    <text evidence="1">Belongs to the DapA family. NanA subfamily.</text>
</comment>
<gene>
    <name evidence="1" type="primary">nanA</name>
    <name type="ordered locus">NWMN_0257</name>
</gene>
<sequence>MNKDLKGLYAALLVPFDENGQVNEQGLKQIAQNAIETEELDGLYVNGSSGENFLLNTEQKKQVFKVAKEAVGDKVKLIAQVGSLDLNEAIELGKYATELGYDALSAVTPFYYPFTFEEIRDYYFDIIEATQNNMIIYAIPDLTGVNISIEQFSELFNHEKIVGVKYTAPNFFLLERIRKAFPDKLILSGFDEMLVQATISGVDGAIGSTYNVNGRRARKIFDLARQGQIQEAYQLQHDSNDIIETVLSMGIYPTLKEILRHRGIDAGLPKRPFKPFNEAHRQTLDQLIAKYDL</sequence>
<dbReference type="EC" id="4.1.3.3" evidence="1"/>
<dbReference type="EMBL" id="AP009351">
    <property type="protein sequence ID" value="BAF66529.1"/>
    <property type="molecule type" value="Genomic_DNA"/>
</dbReference>
<dbReference type="RefSeq" id="WP_001030738.1">
    <property type="nucleotide sequence ID" value="NZ_JBBIAE010000003.1"/>
</dbReference>
<dbReference type="SMR" id="A6QDU7"/>
<dbReference type="KEGG" id="sae:NWMN_0257"/>
<dbReference type="HOGENOM" id="CLU_049343_5_1_9"/>
<dbReference type="UniPathway" id="UPA00629">
    <property type="reaction ID" value="UER00680"/>
</dbReference>
<dbReference type="Proteomes" id="UP000006386">
    <property type="component" value="Chromosome"/>
</dbReference>
<dbReference type="GO" id="GO:0005829">
    <property type="term" value="C:cytosol"/>
    <property type="evidence" value="ECO:0007669"/>
    <property type="project" value="TreeGrafter"/>
</dbReference>
<dbReference type="GO" id="GO:0008747">
    <property type="term" value="F:N-acetylneuraminate lyase activity"/>
    <property type="evidence" value="ECO:0007669"/>
    <property type="project" value="UniProtKB-UniRule"/>
</dbReference>
<dbReference type="GO" id="GO:0005975">
    <property type="term" value="P:carbohydrate metabolic process"/>
    <property type="evidence" value="ECO:0007669"/>
    <property type="project" value="UniProtKB-UniRule"/>
</dbReference>
<dbReference type="GO" id="GO:0019262">
    <property type="term" value="P:N-acetylneuraminate catabolic process"/>
    <property type="evidence" value="ECO:0007669"/>
    <property type="project" value="UniProtKB-UniRule"/>
</dbReference>
<dbReference type="CDD" id="cd00954">
    <property type="entry name" value="NAL"/>
    <property type="match status" value="1"/>
</dbReference>
<dbReference type="FunFam" id="3.20.20.70:FF:000039">
    <property type="entry name" value="N-acetylneuraminate lyase"/>
    <property type="match status" value="1"/>
</dbReference>
<dbReference type="Gene3D" id="3.20.20.70">
    <property type="entry name" value="Aldolase class I"/>
    <property type="match status" value="1"/>
</dbReference>
<dbReference type="HAMAP" id="MF_01237">
    <property type="entry name" value="N_acetylneuram_lyase"/>
    <property type="match status" value="1"/>
</dbReference>
<dbReference type="InterPro" id="IPR013785">
    <property type="entry name" value="Aldolase_TIM"/>
</dbReference>
<dbReference type="InterPro" id="IPR002220">
    <property type="entry name" value="DapA-like"/>
</dbReference>
<dbReference type="InterPro" id="IPR005264">
    <property type="entry name" value="NanA"/>
</dbReference>
<dbReference type="InterPro" id="IPR020625">
    <property type="entry name" value="Schiff_base-form_aldolases_AS"/>
</dbReference>
<dbReference type="NCBIfam" id="NF003164">
    <property type="entry name" value="PRK04147.1"/>
    <property type="match status" value="1"/>
</dbReference>
<dbReference type="PANTHER" id="PTHR42849">
    <property type="entry name" value="N-ACETYLNEURAMINATE LYASE"/>
    <property type="match status" value="1"/>
</dbReference>
<dbReference type="PANTHER" id="PTHR42849:SF1">
    <property type="entry name" value="N-ACETYLNEURAMINATE LYASE"/>
    <property type="match status" value="1"/>
</dbReference>
<dbReference type="Pfam" id="PF00701">
    <property type="entry name" value="DHDPS"/>
    <property type="match status" value="1"/>
</dbReference>
<dbReference type="PIRSF" id="PIRSF001365">
    <property type="entry name" value="DHDPS"/>
    <property type="match status" value="1"/>
</dbReference>
<dbReference type="PRINTS" id="PR00146">
    <property type="entry name" value="DHPICSNTHASE"/>
</dbReference>
<dbReference type="SMART" id="SM01130">
    <property type="entry name" value="DHDPS"/>
    <property type="match status" value="1"/>
</dbReference>
<dbReference type="SUPFAM" id="SSF51569">
    <property type="entry name" value="Aldolase"/>
    <property type="match status" value="1"/>
</dbReference>
<dbReference type="PROSITE" id="PS00666">
    <property type="entry name" value="DHDPS_2"/>
    <property type="match status" value="1"/>
</dbReference>
<reference key="1">
    <citation type="journal article" date="2008" name="J. Bacteriol.">
        <title>Genome sequence of Staphylococcus aureus strain Newman and comparative analysis of staphylococcal genomes: polymorphism and evolution of two major pathogenicity islands.</title>
        <authorList>
            <person name="Baba T."/>
            <person name="Bae T."/>
            <person name="Schneewind O."/>
            <person name="Takeuchi F."/>
            <person name="Hiramatsu K."/>
        </authorList>
    </citation>
    <scope>NUCLEOTIDE SEQUENCE [LARGE SCALE GENOMIC DNA]</scope>
    <source>
        <strain>Newman</strain>
    </source>
</reference>
<evidence type="ECO:0000255" key="1">
    <source>
        <dbReference type="HAMAP-Rule" id="MF_01237"/>
    </source>
</evidence>
<accession>A6QDU7</accession>
<feature type="chain" id="PRO_1000073171" description="N-acetylneuraminate lyase">
    <location>
        <begin position="1"/>
        <end position="293"/>
    </location>
</feature>
<feature type="active site" description="Proton donor" evidence="1">
    <location>
        <position position="137"/>
    </location>
</feature>
<feature type="active site" description="Schiff-base intermediate with substrate" evidence="1">
    <location>
        <position position="165"/>
    </location>
</feature>
<feature type="binding site" evidence="1">
    <location>
        <position position="48"/>
    </location>
    <ligand>
        <name>aceneuramate</name>
        <dbReference type="ChEBI" id="CHEBI:173083"/>
    </ligand>
</feature>
<feature type="binding site" evidence="1">
    <location>
        <position position="49"/>
    </location>
    <ligand>
        <name>aceneuramate</name>
        <dbReference type="ChEBI" id="CHEBI:173083"/>
    </ligand>
</feature>
<feature type="binding site" evidence="1">
    <location>
        <position position="167"/>
    </location>
    <ligand>
        <name>aceneuramate</name>
        <dbReference type="ChEBI" id="CHEBI:173083"/>
    </ligand>
</feature>
<feature type="binding site" evidence="1">
    <location>
        <position position="189"/>
    </location>
    <ligand>
        <name>aceneuramate</name>
        <dbReference type="ChEBI" id="CHEBI:173083"/>
    </ligand>
</feature>
<feature type="binding site" evidence="1">
    <location>
        <position position="191"/>
    </location>
    <ligand>
        <name>aceneuramate</name>
        <dbReference type="ChEBI" id="CHEBI:173083"/>
    </ligand>
</feature>
<feature type="binding site" evidence="1">
    <location>
        <position position="192"/>
    </location>
    <ligand>
        <name>aceneuramate</name>
        <dbReference type="ChEBI" id="CHEBI:173083"/>
    </ligand>
</feature>
<feature type="binding site" evidence="1">
    <location>
        <position position="208"/>
    </location>
    <ligand>
        <name>aceneuramate</name>
        <dbReference type="ChEBI" id="CHEBI:173083"/>
    </ligand>
</feature>
<proteinExistence type="inferred from homology"/>